<dbReference type="EMBL" id="M13541">
    <property type="protein sequence ID" value="AAA39629.1"/>
    <property type="molecule type" value="mRNA"/>
</dbReference>
<dbReference type="PIR" id="A02241">
    <property type="entry name" value="HLMSBF"/>
</dbReference>
<dbReference type="SMR" id="P06346"/>
<dbReference type="MINT" id="P06346"/>
<dbReference type="GlyCosmos" id="P06346">
    <property type="glycosylation" value="1 site, No reported glycans"/>
</dbReference>
<dbReference type="jPOST" id="P06346"/>
<dbReference type="ProteomicsDB" id="269680"/>
<dbReference type="AGR" id="MGI:103070"/>
<dbReference type="MGI" id="MGI:103070">
    <property type="gene designation" value="H2-Ab1"/>
</dbReference>
<dbReference type="OrthoDB" id="10043043at2759"/>
<dbReference type="ChiTaRS" id="H2-Ab1">
    <property type="organism name" value="mouse"/>
</dbReference>
<dbReference type="Proteomes" id="UP000000589">
    <property type="component" value="Unplaced"/>
</dbReference>
<dbReference type="GO" id="GO:0005769">
    <property type="term" value="C:early endosome"/>
    <property type="evidence" value="ECO:0000314"/>
    <property type="project" value="MGI"/>
</dbReference>
<dbReference type="GO" id="GO:0009897">
    <property type="term" value="C:external side of plasma membrane"/>
    <property type="evidence" value="ECO:0000314"/>
    <property type="project" value="MGI"/>
</dbReference>
<dbReference type="GO" id="GO:0005794">
    <property type="term" value="C:Golgi apparatus"/>
    <property type="evidence" value="ECO:0000314"/>
    <property type="project" value="MGI"/>
</dbReference>
<dbReference type="GO" id="GO:0016020">
    <property type="term" value="C:membrane"/>
    <property type="evidence" value="ECO:0000314"/>
    <property type="project" value="MGI"/>
</dbReference>
<dbReference type="GO" id="GO:0042613">
    <property type="term" value="C:MHC class II protein complex"/>
    <property type="evidence" value="ECO:0000314"/>
    <property type="project" value="MGI"/>
</dbReference>
<dbReference type="GO" id="GO:0005771">
    <property type="term" value="C:multivesicular body"/>
    <property type="evidence" value="ECO:0000314"/>
    <property type="project" value="MGI"/>
</dbReference>
<dbReference type="GO" id="GO:0005886">
    <property type="term" value="C:plasma membrane"/>
    <property type="evidence" value="ECO:0000314"/>
    <property type="project" value="MGI"/>
</dbReference>
<dbReference type="GO" id="GO:0042605">
    <property type="term" value="F:peptide antigen binding"/>
    <property type="evidence" value="ECO:0000314"/>
    <property type="project" value="MGI"/>
</dbReference>
<dbReference type="GO" id="GO:0002250">
    <property type="term" value="P:adaptive immune response"/>
    <property type="evidence" value="ECO:0007669"/>
    <property type="project" value="UniProtKB-KW"/>
</dbReference>
<dbReference type="GO" id="GO:0019882">
    <property type="term" value="P:antigen processing and presentation"/>
    <property type="evidence" value="ECO:0000314"/>
    <property type="project" value="MGI"/>
</dbReference>
<dbReference type="GO" id="GO:0019886">
    <property type="term" value="P:antigen processing and presentation of exogenous peptide antigen via MHC class II"/>
    <property type="evidence" value="ECO:0000314"/>
    <property type="project" value="MGI"/>
</dbReference>
<dbReference type="GO" id="GO:0048002">
    <property type="term" value="P:antigen processing and presentation of peptide antigen"/>
    <property type="evidence" value="ECO:0000314"/>
    <property type="project" value="MGI"/>
</dbReference>
<dbReference type="GO" id="GO:0006955">
    <property type="term" value="P:immune response"/>
    <property type="evidence" value="ECO:0000315"/>
    <property type="project" value="MGI"/>
</dbReference>
<dbReference type="CDD" id="cd21001">
    <property type="entry name" value="IgC1_MHC_II_beta_HLA-DQ_I-A"/>
    <property type="match status" value="1"/>
</dbReference>
<dbReference type="FunFam" id="2.60.40.10:FF:000116">
    <property type="entry name" value="HLA class II histocompatibility antigen, DRB1-1 beta chain"/>
    <property type="match status" value="1"/>
</dbReference>
<dbReference type="FunFam" id="3.10.320.10:FF:000001">
    <property type="entry name" value="HLA class II histocompatibility antigen, DRB1-1 beta chain"/>
    <property type="match status" value="1"/>
</dbReference>
<dbReference type="Gene3D" id="3.10.320.10">
    <property type="entry name" value="Class II Histocompatibility Antigen, M Beta Chain, Chain B, domain 1"/>
    <property type="match status" value="1"/>
</dbReference>
<dbReference type="Gene3D" id="2.60.40.10">
    <property type="entry name" value="Immunoglobulins"/>
    <property type="match status" value="1"/>
</dbReference>
<dbReference type="InterPro" id="IPR007110">
    <property type="entry name" value="Ig-like_dom"/>
</dbReference>
<dbReference type="InterPro" id="IPR036179">
    <property type="entry name" value="Ig-like_dom_sf"/>
</dbReference>
<dbReference type="InterPro" id="IPR013783">
    <property type="entry name" value="Ig-like_fold"/>
</dbReference>
<dbReference type="InterPro" id="IPR003006">
    <property type="entry name" value="Ig/MHC_CS"/>
</dbReference>
<dbReference type="InterPro" id="IPR003597">
    <property type="entry name" value="Ig_C1-set"/>
</dbReference>
<dbReference type="InterPro" id="IPR050160">
    <property type="entry name" value="MHC/Immunoglobulin"/>
</dbReference>
<dbReference type="InterPro" id="IPR011162">
    <property type="entry name" value="MHC_I/II-like_Ag-recog"/>
</dbReference>
<dbReference type="InterPro" id="IPR014745">
    <property type="entry name" value="MHC_II_a/b_N"/>
</dbReference>
<dbReference type="InterPro" id="IPR000353">
    <property type="entry name" value="MHC_II_b_N"/>
</dbReference>
<dbReference type="PANTHER" id="PTHR19944:SF101">
    <property type="entry name" value="HLA CLASS II HISTOCOMPATIBILITY ANTIGEN, DQ BETA 1 CHAIN"/>
    <property type="match status" value="1"/>
</dbReference>
<dbReference type="PANTHER" id="PTHR19944">
    <property type="entry name" value="MHC CLASS II-RELATED"/>
    <property type="match status" value="1"/>
</dbReference>
<dbReference type="Pfam" id="PF07654">
    <property type="entry name" value="C1-set"/>
    <property type="match status" value="1"/>
</dbReference>
<dbReference type="Pfam" id="PF00969">
    <property type="entry name" value="MHC_II_beta"/>
    <property type="match status" value="1"/>
</dbReference>
<dbReference type="SMART" id="SM00407">
    <property type="entry name" value="IGc1"/>
    <property type="match status" value="1"/>
</dbReference>
<dbReference type="SMART" id="SM00921">
    <property type="entry name" value="MHC_II_beta"/>
    <property type="match status" value="1"/>
</dbReference>
<dbReference type="SUPFAM" id="SSF48726">
    <property type="entry name" value="Immunoglobulin"/>
    <property type="match status" value="1"/>
</dbReference>
<dbReference type="SUPFAM" id="SSF54452">
    <property type="entry name" value="MHC antigen-recognition domain"/>
    <property type="match status" value="1"/>
</dbReference>
<dbReference type="PROSITE" id="PS50835">
    <property type="entry name" value="IG_LIKE"/>
    <property type="match status" value="1"/>
</dbReference>
<dbReference type="PROSITE" id="PS00290">
    <property type="entry name" value="IG_MHC"/>
    <property type="match status" value="1"/>
</dbReference>
<feature type="signal peptide" evidence="1">
    <location>
        <begin position="1" status="less than"/>
        <end position="16"/>
    </location>
</feature>
<feature type="chain" id="PRO_0000018995" description="H-2 class II histocompatibility antigen, A-F beta chain">
    <location>
        <begin position="17"/>
        <end position="252"/>
    </location>
</feature>
<feature type="topological domain" description="Extracellular" evidence="2">
    <location>
        <begin position="17"/>
        <end position="213"/>
    </location>
</feature>
<feature type="transmembrane region" description="Helical" evidence="2">
    <location>
        <begin position="214"/>
        <end position="234"/>
    </location>
</feature>
<feature type="topological domain" description="Cytoplasmic" evidence="2">
    <location>
        <begin position="235"/>
        <end position="252"/>
    </location>
</feature>
<feature type="domain" description="Ig-like C1-type">
    <location>
        <begin position="112"/>
        <end position="200"/>
    </location>
</feature>
<feature type="region of interest" description="Beta-1">
    <location>
        <begin position="17"/>
        <end position="109"/>
    </location>
</feature>
<feature type="region of interest" description="Beta-2">
    <location>
        <begin position="110"/>
        <end position="203"/>
    </location>
</feature>
<feature type="region of interest" description="Connecting peptide">
    <location>
        <begin position="204"/>
        <end position="213"/>
    </location>
</feature>
<feature type="glycosylation site" description="N-linked (GlcNAc...) asparagine" evidence="2">
    <location>
        <position position="35"/>
    </location>
</feature>
<feature type="disulfide bond" evidence="3">
    <location>
        <begin position="31"/>
        <end position="93"/>
    </location>
</feature>
<feature type="disulfide bond" evidence="3">
    <location>
        <begin position="132"/>
        <end position="188"/>
    </location>
</feature>
<feature type="non-terminal residue">
    <location>
        <position position="1"/>
    </location>
</feature>
<organism>
    <name type="scientific">Mus musculus</name>
    <name type="common">Mouse</name>
    <dbReference type="NCBI Taxonomy" id="10090"/>
    <lineage>
        <taxon>Eukaryota</taxon>
        <taxon>Metazoa</taxon>
        <taxon>Chordata</taxon>
        <taxon>Craniata</taxon>
        <taxon>Vertebrata</taxon>
        <taxon>Euteleostomi</taxon>
        <taxon>Mammalia</taxon>
        <taxon>Eutheria</taxon>
        <taxon>Euarchontoglires</taxon>
        <taxon>Glires</taxon>
        <taxon>Rodentia</taxon>
        <taxon>Myomorpha</taxon>
        <taxon>Muroidea</taxon>
        <taxon>Muridae</taxon>
        <taxon>Murinae</taxon>
        <taxon>Mus</taxon>
        <taxon>Mus</taxon>
    </lineage>
</organism>
<proteinExistence type="evidence at protein level"/>
<comment type="subcellular location">
    <subcellularLocation>
        <location evidence="6">Membrane</location>
        <topology evidence="6">Single-pass type I membrane protein</topology>
    </subcellularLocation>
</comment>
<comment type="PTM">
    <text evidence="4 5">Ubiquitinated in immature dendritic cells leading to down-regulation of MHC class II.</text>
</comment>
<comment type="similarity">
    <text evidence="6">Belongs to the MHC class II family.</text>
</comment>
<keyword id="KW-1064">Adaptive immunity</keyword>
<keyword id="KW-1015">Disulfide bond</keyword>
<keyword id="KW-0325">Glycoprotein</keyword>
<keyword id="KW-0391">Immunity</keyword>
<keyword id="KW-0472">Membrane</keyword>
<keyword id="KW-0491">MHC II</keyword>
<keyword id="KW-1185">Reference proteome</keyword>
<keyword id="KW-0732">Signal</keyword>
<keyword id="KW-0812">Transmembrane</keyword>
<keyword id="KW-1133">Transmembrane helix</keyword>
<keyword id="KW-0832">Ubl conjugation</keyword>
<gene>
    <name type="primary">H2-Ab1</name>
</gene>
<name>HB2F_MOUSE</name>
<evidence type="ECO:0000250" key="1"/>
<evidence type="ECO:0000255" key="2"/>
<evidence type="ECO:0000255" key="3">
    <source>
        <dbReference type="PROSITE-ProRule" id="PRU00114"/>
    </source>
</evidence>
<evidence type="ECO:0000269" key="4">
    <source>
    </source>
</evidence>
<evidence type="ECO:0000269" key="5">
    <source>
    </source>
</evidence>
<evidence type="ECO:0000305" key="6"/>
<reference key="1">
    <citation type="journal article" date="1986" name="Proc. Natl. Acad. Sci. U.S.A.">
        <title>Sequence analysis and structure-function correlations of murine q, k, u, s, and f haplotype I-A beta cDNA clones.</title>
        <authorList>
            <person name="Estess P."/>
            <person name="Begovich A.B."/>
            <person name="Koo M."/>
            <person name="Jones P.P."/>
            <person name="McDevitt H.O."/>
        </authorList>
    </citation>
    <scope>NUCLEOTIDE SEQUENCE [MRNA]</scope>
</reference>
<reference key="2">
    <citation type="journal article" date="2006" name="Immunity">
        <title>Dendritic cells regulate exposure of MHC class II at their plasma membrane by oligoubiquitination.</title>
        <authorList>
            <person name="van Niel G."/>
            <person name="Wubbolts R."/>
            <person name="Ten Broeke T."/>
            <person name="Buschow S.I."/>
            <person name="Ossendorp F.A."/>
            <person name="Melief C.J."/>
            <person name="Raposo G."/>
            <person name="van Balkom B.W."/>
            <person name="Stoorvogel W."/>
        </authorList>
    </citation>
    <scope>UBIQUITINATION</scope>
</reference>
<reference key="3">
    <citation type="journal article" date="2006" name="Nature">
        <title>Surface expression of MHC class II in dendritic cells is controlled by regulated ubiquitination.</title>
        <authorList>
            <person name="Shin J.S."/>
            <person name="Ebersold M."/>
            <person name="Pypaert M."/>
            <person name="Delamarre L."/>
            <person name="Hartley A."/>
            <person name="Mellman I."/>
        </authorList>
    </citation>
    <scope>UBIQUITINATION</scope>
</reference>
<sequence>AAVVVLMVLSSPGTEGGNSERHFVSQFKGECYFTNGTQRIRSVDRYIYNREEYLRFDSDVGEYRAVTELGRSDAEYYNKQYLERTRAELDTVCRHNYEGVETPTSLRRLEQPNVVISLSRTEALNHHNTLVCSVTDFYPAKIKVRWFRNGQEETVGVSSTQLIRNGDWTFQVLVMLEMAPRRGEVYTCHVEHPSLKSPITVEWRAQSESARSKMLSGIGGCVLGVIFLGLGLFIRYRSQKGPRGPPPAGLLQ</sequence>
<protein>
    <recommendedName>
        <fullName>H-2 class II histocompatibility antigen, A-F beta chain</fullName>
    </recommendedName>
</protein>
<accession>P06346</accession>